<comment type="function">
    <text evidence="1">Binds to 23S rRNA.</text>
</comment>
<comment type="subunit">
    <text evidence="1">Part of the 50S ribosomal subunit.</text>
</comment>
<comment type="subcellular location">
    <subcellularLocation>
        <location>Plastid</location>
        <location>Chloroplast</location>
    </subcellularLocation>
</comment>
<comment type="RNA editing">
    <location>
        <position position="48" evidence="2 3"/>
    </location>
    <location>
        <position position="104" evidence="2 3"/>
    </location>
    <text>The nonsense codon at position 104 is modified to a sense codon.</text>
</comment>
<comment type="similarity">
    <text evidence="1">Belongs to the universal ribosomal protein uL14 family.</text>
</comment>
<sequence length="122" mass="13474">MIQPQTYLNVADNSGARKLMCIRILGASNRKYGNIGDIIIAVTKEAVPNMPLKKSEVVRAVIVRTCKEVRRDNGMTIRFDDNVAATTNQEGNPKGTRVFGPVARESRGYNFTKIIPLAPEVL</sequence>
<gene>
    <name evidence="1" type="primary">rpl14</name>
</gene>
<dbReference type="EMBL" id="AB086179">
    <property type="protein sequence ID" value="BAC55386.1"/>
    <property type="molecule type" value="Genomic_DNA"/>
</dbReference>
<dbReference type="EMBL" id="AB087469">
    <property type="protein sequence ID" value="BAC55483.1"/>
    <property type="molecule type" value="mRNA"/>
</dbReference>
<dbReference type="RefSeq" id="NP_777450.1">
    <property type="nucleotide sequence ID" value="NC_004543.1"/>
</dbReference>
<dbReference type="SMR" id="Q85CT4"/>
<dbReference type="GeneID" id="2553412"/>
<dbReference type="GO" id="GO:0009507">
    <property type="term" value="C:chloroplast"/>
    <property type="evidence" value="ECO:0007669"/>
    <property type="project" value="UniProtKB-SubCell"/>
</dbReference>
<dbReference type="GO" id="GO:0022625">
    <property type="term" value="C:cytosolic large ribosomal subunit"/>
    <property type="evidence" value="ECO:0007669"/>
    <property type="project" value="TreeGrafter"/>
</dbReference>
<dbReference type="GO" id="GO:0070180">
    <property type="term" value="F:large ribosomal subunit rRNA binding"/>
    <property type="evidence" value="ECO:0007669"/>
    <property type="project" value="TreeGrafter"/>
</dbReference>
<dbReference type="GO" id="GO:0003735">
    <property type="term" value="F:structural constituent of ribosome"/>
    <property type="evidence" value="ECO:0007669"/>
    <property type="project" value="InterPro"/>
</dbReference>
<dbReference type="GO" id="GO:0006412">
    <property type="term" value="P:translation"/>
    <property type="evidence" value="ECO:0007669"/>
    <property type="project" value="UniProtKB-UniRule"/>
</dbReference>
<dbReference type="CDD" id="cd00337">
    <property type="entry name" value="Ribosomal_uL14"/>
    <property type="match status" value="1"/>
</dbReference>
<dbReference type="Gene3D" id="2.40.150.20">
    <property type="entry name" value="Ribosomal protein L14"/>
    <property type="match status" value="1"/>
</dbReference>
<dbReference type="HAMAP" id="MF_01367">
    <property type="entry name" value="Ribosomal_uL14"/>
    <property type="match status" value="1"/>
</dbReference>
<dbReference type="InterPro" id="IPR000218">
    <property type="entry name" value="Ribosomal_uL14"/>
</dbReference>
<dbReference type="InterPro" id="IPR005745">
    <property type="entry name" value="Ribosomal_uL14_bac-type"/>
</dbReference>
<dbReference type="InterPro" id="IPR036853">
    <property type="entry name" value="Ribosomal_uL14_sf"/>
</dbReference>
<dbReference type="NCBIfam" id="TIGR01067">
    <property type="entry name" value="rplN_bact"/>
    <property type="match status" value="1"/>
</dbReference>
<dbReference type="PANTHER" id="PTHR11761">
    <property type="entry name" value="50S/60S RIBOSOMAL PROTEIN L14/L23"/>
    <property type="match status" value="1"/>
</dbReference>
<dbReference type="PANTHER" id="PTHR11761:SF3">
    <property type="entry name" value="LARGE RIBOSOMAL SUBUNIT PROTEIN UL14M"/>
    <property type="match status" value="1"/>
</dbReference>
<dbReference type="Pfam" id="PF00238">
    <property type="entry name" value="Ribosomal_L14"/>
    <property type="match status" value="1"/>
</dbReference>
<dbReference type="SMART" id="SM01374">
    <property type="entry name" value="Ribosomal_L14"/>
    <property type="match status" value="1"/>
</dbReference>
<dbReference type="SUPFAM" id="SSF50193">
    <property type="entry name" value="Ribosomal protein L14"/>
    <property type="match status" value="1"/>
</dbReference>
<reference key="1">
    <citation type="journal article" date="2003" name="Nucleic Acids Res.">
        <title>The complete nucleotide sequence of the hornwort (Anthoceros formosae) chloroplast genome: insight into the earliest land plants.</title>
        <authorList>
            <person name="Kugita M."/>
            <person name="Kaneko A."/>
            <person name="Yamamoto Y."/>
            <person name="Takeya Y."/>
            <person name="Matsumoto T."/>
            <person name="Yoshinaga K."/>
        </authorList>
    </citation>
    <scope>NUCLEOTIDE SEQUENCE [LARGE SCALE GENOMIC DNA]</scope>
    <scope>RNA EDITING</scope>
</reference>
<reference key="2">
    <citation type="journal article" date="2003" name="Nucleic Acids Res.">
        <title>RNA editing in hornwort chloroplasts makes more than half the genes functional.</title>
        <authorList>
            <person name="Kugita M."/>
            <person name="Yamamoto Y."/>
            <person name="Fujikawa T."/>
            <person name="Matsumoto T."/>
            <person name="Yoshinaga K."/>
        </authorList>
    </citation>
    <scope>NUCLEOTIDE SEQUENCE [MRNA]</scope>
    <scope>RNA EDITING</scope>
    <source>
        <tissue>Thallus</tissue>
    </source>
</reference>
<accession>Q85CT4</accession>
<geneLocation type="chloroplast"/>
<organism>
    <name type="scientific">Anthoceros angustus</name>
    <name type="common">Hornwort</name>
    <name type="synonym">Anthoceros formosae</name>
    <dbReference type="NCBI Taxonomy" id="48387"/>
    <lineage>
        <taxon>Eukaryota</taxon>
        <taxon>Viridiplantae</taxon>
        <taxon>Streptophyta</taxon>
        <taxon>Embryophyta</taxon>
        <taxon>Anthocerotophyta</taxon>
        <taxon>Anthocerotopsida</taxon>
        <taxon>Anthocerotidae</taxon>
        <taxon>Anthocerotales</taxon>
        <taxon>Anthocerotaceae</taxon>
        <taxon>Anthoceros</taxon>
    </lineage>
</organism>
<protein>
    <recommendedName>
        <fullName evidence="1">Large ribosomal subunit protein uL14c</fullName>
    </recommendedName>
    <alternativeName>
        <fullName evidence="4">50S ribosomal protein L14, chloroplastic</fullName>
    </alternativeName>
</protein>
<feature type="chain" id="PRO_0000128581" description="Large ribosomal subunit protein uL14c">
    <location>
        <begin position="1"/>
        <end position="122"/>
    </location>
</feature>
<name>RK14_ANTAG</name>
<evidence type="ECO:0000255" key="1">
    <source>
        <dbReference type="HAMAP-Rule" id="MF_01367"/>
    </source>
</evidence>
<evidence type="ECO:0000269" key="2">
    <source>
    </source>
</evidence>
<evidence type="ECO:0000269" key="3">
    <source>
    </source>
</evidence>
<evidence type="ECO:0000305" key="4"/>
<proteinExistence type="evidence at transcript level"/>
<keyword id="KW-0150">Chloroplast</keyword>
<keyword id="KW-0934">Plastid</keyword>
<keyword id="KW-0687">Ribonucleoprotein</keyword>
<keyword id="KW-0689">Ribosomal protein</keyword>
<keyword id="KW-0691">RNA editing</keyword>
<keyword id="KW-0694">RNA-binding</keyword>
<keyword id="KW-0699">rRNA-binding</keyword>